<protein>
    <recommendedName>
        <fullName evidence="1">UPF0266 membrane protein YobD</fullName>
    </recommendedName>
</protein>
<name>YOBD_ECO81</name>
<proteinExistence type="inferred from homology"/>
<feature type="chain" id="PRO_1000149755" description="UPF0266 membrane protein YobD">
    <location>
        <begin position="1"/>
        <end position="152"/>
    </location>
</feature>
<feature type="transmembrane region" description="Helical" evidence="1">
    <location>
        <begin position="6"/>
        <end position="26"/>
    </location>
</feature>
<feature type="transmembrane region" description="Helical" evidence="1">
    <location>
        <begin position="45"/>
        <end position="65"/>
    </location>
</feature>
<feature type="transmembrane region" description="Helical" evidence="1">
    <location>
        <begin position="67"/>
        <end position="87"/>
    </location>
</feature>
<comment type="subcellular location">
    <subcellularLocation>
        <location evidence="1">Cell inner membrane</location>
        <topology evidence="1">Multi-pass membrane protein</topology>
    </subcellularLocation>
</comment>
<comment type="similarity">
    <text evidence="1">Belongs to the UPF0266 family.</text>
</comment>
<evidence type="ECO:0000255" key="1">
    <source>
        <dbReference type="HAMAP-Rule" id="MF_01071"/>
    </source>
</evidence>
<dbReference type="EMBL" id="CU928162">
    <property type="protein sequence ID" value="CAR08119.1"/>
    <property type="molecule type" value="Genomic_DNA"/>
</dbReference>
<dbReference type="RefSeq" id="WP_000156255.1">
    <property type="nucleotide sequence ID" value="NC_011745.1"/>
</dbReference>
<dbReference type="KEGG" id="ecq:ECED1_2023"/>
<dbReference type="HOGENOM" id="CLU_133645_0_0_6"/>
<dbReference type="Proteomes" id="UP000000748">
    <property type="component" value="Chromosome"/>
</dbReference>
<dbReference type="GO" id="GO:0005886">
    <property type="term" value="C:plasma membrane"/>
    <property type="evidence" value="ECO:0007669"/>
    <property type="project" value="UniProtKB-SubCell"/>
</dbReference>
<dbReference type="HAMAP" id="MF_01071">
    <property type="entry name" value="UPF0266"/>
    <property type="match status" value="1"/>
</dbReference>
<dbReference type="InterPro" id="IPR009328">
    <property type="entry name" value="DUF986"/>
</dbReference>
<dbReference type="NCBIfam" id="NF002791">
    <property type="entry name" value="PRK02913.1"/>
    <property type="match status" value="1"/>
</dbReference>
<dbReference type="Pfam" id="PF06173">
    <property type="entry name" value="DUF986"/>
    <property type="match status" value="1"/>
</dbReference>
<dbReference type="PIRSF" id="PIRSF020687">
    <property type="entry name" value="UCP020687"/>
    <property type="match status" value="1"/>
</dbReference>
<keyword id="KW-0997">Cell inner membrane</keyword>
<keyword id="KW-1003">Cell membrane</keyword>
<keyword id="KW-0472">Membrane</keyword>
<keyword id="KW-0812">Transmembrane</keyword>
<keyword id="KW-1133">Transmembrane helix</keyword>
<accession>B7MVK3</accession>
<sequence>MTITDLVLILFIAALLAFAIYDQFIMPRRNGPTLLAIPLLRRGRIDSVIFVGLIVILIYNNVTNHGALITTWLLSALALMGFYIFWIRVPKIIFKQKGFFFANVWIEYSRIKAMNLSEDGVLVMQLEQRRLLIRVRNIDDLEKIYKLLVSTQ</sequence>
<reference key="1">
    <citation type="journal article" date="2009" name="PLoS Genet.">
        <title>Organised genome dynamics in the Escherichia coli species results in highly diverse adaptive paths.</title>
        <authorList>
            <person name="Touchon M."/>
            <person name="Hoede C."/>
            <person name="Tenaillon O."/>
            <person name="Barbe V."/>
            <person name="Baeriswyl S."/>
            <person name="Bidet P."/>
            <person name="Bingen E."/>
            <person name="Bonacorsi S."/>
            <person name="Bouchier C."/>
            <person name="Bouvet O."/>
            <person name="Calteau A."/>
            <person name="Chiapello H."/>
            <person name="Clermont O."/>
            <person name="Cruveiller S."/>
            <person name="Danchin A."/>
            <person name="Diard M."/>
            <person name="Dossat C."/>
            <person name="Karoui M.E."/>
            <person name="Frapy E."/>
            <person name="Garry L."/>
            <person name="Ghigo J.M."/>
            <person name="Gilles A.M."/>
            <person name="Johnson J."/>
            <person name="Le Bouguenec C."/>
            <person name="Lescat M."/>
            <person name="Mangenot S."/>
            <person name="Martinez-Jehanne V."/>
            <person name="Matic I."/>
            <person name="Nassif X."/>
            <person name="Oztas S."/>
            <person name="Petit M.A."/>
            <person name="Pichon C."/>
            <person name="Rouy Z."/>
            <person name="Ruf C.S."/>
            <person name="Schneider D."/>
            <person name="Tourret J."/>
            <person name="Vacherie B."/>
            <person name="Vallenet D."/>
            <person name="Medigue C."/>
            <person name="Rocha E.P.C."/>
            <person name="Denamur E."/>
        </authorList>
    </citation>
    <scope>NUCLEOTIDE SEQUENCE [LARGE SCALE GENOMIC DNA]</scope>
    <source>
        <strain>ED1a</strain>
    </source>
</reference>
<organism>
    <name type="scientific">Escherichia coli O81 (strain ED1a)</name>
    <dbReference type="NCBI Taxonomy" id="585397"/>
    <lineage>
        <taxon>Bacteria</taxon>
        <taxon>Pseudomonadati</taxon>
        <taxon>Pseudomonadota</taxon>
        <taxon>Gammaproteobacteria</taxon>
        <taxon>Enterobacterales</taxon>
        <taxon>Enterobacteriaceae</taxon>
        <taxon>Escherichia</taxon>
    </lineage>
</organism>
<gene>
    <name evidence="1" type="primary">yobD</name>
    <name type="ordered locus">ECED1_2023</name>
</gene>